<feature type="chain" id="PRO_1000059511" description="Chaperone protein DnaK">
    <location>
        <begin position="1"/>
        <end position="638"/>
    </location>
</feature>
<feature type="region of interest" description="Disordered" evidence="2">
    <location>
        <begin position="600"/>
        <end position="638"/>
    </location>
</feature>
<feature type="compositionally biased region" description="Gly residues" evidence="2">
    <location>
        <begin position="602"/>
        <end position="614"/>
    </location>
</feature>
<feature type="compositionally biased region" description="Low complexity" evidence="2">
    <location>
        <begin position="615"/>
        <end position="624"/>
    </location>
</feature>
<feature type="compositionally biased region" description="Basic and acidic residues" evidence="2">
    <location>
        <begin position="625"/>
        <end position="638"/>
    </location>
</feature>
<feature type="modified residue" description="Phosphothreonine; by autocatalysis" evidence="1">
    <location>
        <position position="197"/>
    </location>
</feature>
<protein>
    <recommendedName>
        <fullName evidence="1">Chaperone protein DnaK</fullName>
    </recommendedName>
    <alternativeName>
        <fullName evidence="1">HSP70</fullName>
    </alternativeName>
    <alternativeName>
        <fullName evidence="1">Heat shock 70 kDa protein</fullName>
    </alternativeName>
    <alternativeName>
        <fullName evidence="1">Heat shock protein 70</fullName>
    </alternativeName>
</protein>
<sequence>MGKIIGIDLGTTNSCVSVFEGNEPVVIANSEGKRTTPSIVAFVDGGERKVGDPAKRQAITNPQRTIFSIKRFMGETWDQVQKETARVPYKVVKGDNNTPRVDIDGRLYTPQEISAMILQKMKKTAEDYLGQEVTEAVITVPAYFSDSQRQATKEAGQIAGLEVKRIVNEPTAAALAYGLDKAHKDMKIAVFDLGGGTFDISILEFGGGVFEVLSTNGDTHLGGDDFDQVIIDWLVQEFKNDEGADLTKDPMAMQRLKEAAEKAKIELSSSTSTEINLPYIMPVDGMPKHLVKTLTRAKFEALAHNLIQACLEPCKKAMSDAGLSNSDIDEVILVGGSSRIPAVQELVEKFFGKTPSKGVNPDEVVAVGAAVQGAVLTDEIKGVVLLDVTPLSMGIETLGGVMTKLIDANTTIPARKSETFSTAADNQTEVTIHVLQGERPMAAQNKSIGQFNLTGIAPARRGVPQIEVTFDIDANGILKVSAKDKATGKEQAIRIEASSGLSKEEIEKMKAEAEANAEADKKEREKIDKLNQADSMIFSTENQLKELGDKLPADKKAPIEAALQKLKDAHKAQDLSAIDTAMAELNTAFQAASAEMYAQSGAQGGAQAGPGAGAGQQANQGSSNNKEDIQDADFEEVK</sequence>
<gene>
    <name evidence="1" type="primary">dnaK</name>
    <name type="ordered locus">BVU_2382</name>
</gene>
<proteinExistence type="inferred from homology"/>
<keyword id="KW-0067">ATP-binding</keyword>
<keyword id="KW-0143">Chaperone</keyword>
<keyword id="KW-0547">Nucleotide-binding</keyword>
<keyword id="KW-0597">Phosphoprotein</keyword>
<keyword id="KW-0346">Stress response</keyword>
<evidence type="ECO:0000255" key="1">
    <source>
        <dbReference type="HAMAP-Rule" id="MF_00332"/>
    </source>
</evidence>
<evidence type="ECO:0000256" key="2">
    <source>
        <dbReference type="SAM" id="MobiDB-lite"/>
    </source>
</evidence>
<accession>A6L2X7</accession>
<dbReference type="EMBL" id="CP000139">
    <property type="protein sequence ID" value="ABR40041.1"/>
    <property type="molecule type" value="Genomic_DNA"/>
</dbReference>
<dbReference type="RefSeq" id="WP_005846379.1">
    <property type="nucleotide sequence ID" value="NZ_JANSWM010000034.1"/>
</dbReference>
<dbReference type="SMR" id="A6L2X7"/>
<dbReference type="STRING" id="435590.BVU_2382"/>
<dbReference type="PaxDb" id="435590-BVU_2382"/>
<dbReference type="GeneID" id="5303346"/>
<dbReference type="KEGG" id="bvu:BVU_2382"/>
<dbReference type="eggNOG" id="COG0443">
    <property type="taxonomic scope" value="Bacteria"/>
</dbReference>
<dbReference type="HOGENOM" id="CLU_005965_2_4_10"/>
<dbReference type="BioCyc" id="BVUL435590:G1G59-2477-MONOMER"/>
<dbReference type="Proteomes" id="UP000002861">
    <property type="component" value="Chromosome"/>
</dbReference>
<dbReference type="GO" id="GO:0005524">
    <property type="term" value="F:ATP binding"/>
    <property type="evidence" value="ECO:0007669"/>
    <property type="project" value="UniProtKB-UniRule"/>
</dbReference>
<dbReference type="GO" id="GO:0140662">
    <property type="term" value="F:ATP-dependent protein folding chaperone"/>
    <property type="evidence" value="ECO:0007669"/>
    <property type="project" value="InterPro"/>
</dbReference>
<dbReference type="GO" id="GO:0051082">
    <property type="term" value="F:unfolded protein binding"/>
    <property type="evidence" value="ECO:0007669"/>
    <property type="project" value="InterPro"/>
</dbReference>
<dbReference type="CDD" id="cd10234">
    <property type="entry name" value="ASKHA_NBD_HSP70_DnaK-like"/>
    <property type="match status" value="1"/>
</dbReference>
<dbReference type="FunFam" id="2.60.34.10:FF:000014">
    <property type="entry name" value="Chaperone protein DnaK HSP70"/>
    <property type="match status" value="1"/>
</dbReference>
<dbReference type="FunFam" id="1.20.1270.10:FF:000001">
    <property type="entry name" value="Molecular chaperone DnaK"/>
    <property type="match status" value="1"/>
</dbReference>
<dbReference type="FunFam" id="3.30.420.40:FF:000004">
    <property type="entry name" value="Molecular chaperone DnaK"/>
    <property type="match status" value="1"/>
</dbReference>
<dbReference type="FunFam" id="3.90.640.10:FF:000003">
    <property type="entry name" value="Molecular chaperone DnaK"/>
    <property type="match status" value="1"/>
</dbReference>
<dbReference type="Gene3D" id="1.20.1270.10">
    <property type="match status" value="1"/>
</dbReference>
<dbReference type="Gene3D" id="3.30.420.40">
    <property type="match status" value="2"/>
</dbReference>
<dbReference type="Gene3D" id="3.90.640.10">
    <property type="entry name" value="Actin, Chain A, domain 4"/>
    <property type="match status" value="1"/>
</dbReference>
<dbReference type="Gene3D" id="2.60.34.10">
    <property type="entry name" value="Substrate Binding Domain Of DNAk, Chain A, domain 1"/>
    <property type="match status" value="1"/>
</dbReference>
<dbReference type="HAMAP" id="MF_00332">
    <property type="entry name" value="DnaK"/>
    <property type="match status" value="1"/>
</dbReference>
<dbReference type="InterPro" id="IPR043129">
    <property type="entry name" value="ATPase_NBD"/>
</dbReference>
<dbReference type="InterPro" id="IPR012725">
    <property type="entry name" value="Chaperone_DnaK"/>
</dbReference>
<dbReference type="InterPro" id="IPR018181">
    <property type="entry name" value="Heat_shock_70_CS"/>
</dbReference>
<dbReference type="InterPro" id="IPR029048">
    <property type="entry name" value="HSP70_C_sf"/>
</dbReference>
<dbReference type="InterPro" id="IPR029047">
    <property type="entry name" value="HSP70_peptide-bd_sf"/>
</dbReference>
<dbReference type="InterPro" id="IPR013126">
    <property type="entry name" value="Hsp_70_fam"/>
</dbReference>
<dbReference type="NCBIfam" id="NF001413">
    <property type="entry name" value="PRK00290.1"/>
    <property type="match status" value="1"/>
</dbReference>
<dbReference type="NCBIfam" id="NF003520">
    <property type="entry name" value="PRK05183.1"/>
    <property type="match status" value="1"/>
</dbReference>
<dbReference type="NCBIfam" id="TIGR02350">
    <property type="entry name" value="prok_dnaK"/>
    <property type="match status" value="1"/>
</dbReference>
<dbReference type="PANTHER" id="PTHR19375">
    <property type="entry name" value="HEAT SHOCK PROTEIN 70KDA"/>
    <property type="match status" value="1"/>
</dbReference>
<dbReference type="Pfam" id="PF00012">
    <property type="entry name" value="HSP70"/>
    <property type="match status" value="1"/>
</dbReference>
<dbReference type="PRINTS" id="PR00301">
    <property type="entry name" value="HEATSHOCK70"/>
</dbReference>
<dbReference type="SUPFAM" id="SSF53067">
    <property type="entry name" value="Actin-like ATPase domain"/>
    <property type="match status" value="2"/>
</dbReference>
<dbReference type="SUPFAM" id="SSF100934">
    <property type="entry name" value="Heat shock protein 70kD (HSP70), C-terminal subdomain"/>
    <property type="match status" value="1"/>
</dbReference>
<dbReference type="SUPFAM" id="SSF100920">
    <property type="entry name" value="Heat shock protein 70kD (HSP70), peptide-binding domain"/>
    <property type="match status" value="1"/>
</dbReference>
<dbReference type="PROSITE" id="PS00297">
    <property type="entry name" value="HSP70_1"/>
    <property type="match status" value="1"/>
</dbReference>
<dbReference type="PROSITE" id="PS00329">
    <property type="entry name" value="HSP70_2"/>
    <property type="match status" value="1"/>
</dbReference>
<dbReference type="PROSITE" id="PS01036">
    <property type="entry name" value="HSP70_3"/>
    <property type="match status" value="1"/>
</dbReference>
<organism>
    <name type="scientific">Phocaeicola vulgatus (strain ATCC 8482 / DSM 1447 / JCM 5826 / CCUG 4940 / NBRC 14291 / NCTC 11154)</name>
    <name type="common">Bacteroides vulgatus</name>
    <dbReference type="NCBI Taxonomy" id="435590"/>
    <lineage>
        <taxon>Bacteria</taxon>
        <taxon>Pseudomonadati</taxon>
        <taxon>Bacteroidota</taxon>
        <taxon>Bacteroidia</taxon>
        <taxon>Bacteroidales</taxon>
        <taxon>Bacteroidaceae</taxon>
        <taxon>Phocaeicola</taxon>
    </lineage>
</organism>
<name>DNAK_PHOV8</name>
<reference key="1">
    <citation type="journal article" date="2007" name="PLoS Biol.">
        <title>Evolution of symbiotic bacteria in the distal human intestine.</title>
        <authorList>
            <person name="Xu J."/>
            <person name="Mahowald M.A."/>
            <person name="Ley R.E."/>
            <person name="Lozupone C.A."/>
            <person name="Hamady M."/>
            <person name="Martens E.C."/>
            <person name="Henrissat B."/>
            <person name="Coutinho P.M."/>
            <person name="Minx P."/>
            <person name="Latreille P."/>
            <person name="Cordum H."/>
            <person name="Van Brunt A."/>
            <person name="Kim K."/>
            <person name="Fulton R.S."/>
            <person name="Fulton L.A."/>
            <person name="Clifton S.W."/>
            <person name="Wilson R.K."/>
            <person name="Knight R.D."/>
            <person name="Gordon J.I."/>
        </authorList>
    </citation>
    <scope>NUCLEOTIDE SEQUENCE [LARGE SCALE GENOMIC DNA]</scope>
    <source>
        <strain>ATCC 8482 / DSM 1447 / JCM 5826 / CCUG 4940 / NBRC 14291 / NCTC 11154</strain>
    </source>
</reference>
<comment type="function">
    <text evidence="1">Acts as a chaperone.</text>
</comment>
<comment type="induction">
    <text evidence="1">By stress conditions e.g. heat shock.</text>
</comment>
<comment type="similarity">
    <text evidence="1">Belongs to the heat shock protein 70 family.</text>
</comment>